<gene>
    <name evidence="1" type="primary">rplI</name>
    <name type="ordered locus">BF3630</name>
</gene>
<evidence type="ECO:0000255" key="1">
    <source>
        <dbReference type="HAMAP-Rule" id="MF_00503"/>
    </source>
</evidence>
<evidence type="ECO:0000305" key="2"/>
<protein>
    <recommendedName>
        <fullName evidence="1">Large ribosomal subunit protein bL9</fullName>
    </recommendedName>
    <alternativeName>
        <fullName evidence="2">50S ribosomal protein L9</fullName>
    </alternativeName>
</protein>
<name>RL9_BACFN</name>
<dbReference type="EMBL" id="CR626927">
    <property type="protein sequence ID" value="CAH09311.1"/>
    <property type="molecule type" value="Genomic_DNA"/>
</dbReference>
<dbReference type="RefSeq" id="WP_005790944.1">
    <property type="nucleotide sequence ID" value="NZ_UFTH01000001.1"/>
</dbReference>
<dbReference type="SMR" id="Q5L9B7"/>
<dbReference type="PaxDb" id="272559-BF9343_3530"/>
<dbReference type="GeneID" id="60369061"/>
<dbReference type="KEGG" id="bfs:BF9343_3530"/>
<dbReference type="eggNOG" id="COG0359">
    <property type="taxonomic scope" value="Bacteria"/>
</dbReference>
<dbReference type="HOGENOM" id="CLU_078938_3_0_10"/>
<dbReference type="Proteomes" id="UP000006731">
    <property type="component" value="Chromosome"/>
</dbReference>
<dbReference type="GO" id="GO:1990904">
    <property type="term" value="C:ribonucleoprotein complex"/>
    <property type="evidence" value="ECO:0007669"/>
    <property type="project" value="UniProtKB-KW"/>
</dbReference>
<dbReference type="GO" id="GO:0005840">
    <property type="term" value="C:ribosome"/>
    <property type="evidence" value="ECO:0007669"/>
    <property type="project" value="UniProtKB-KW"/>
</dbReference>
<dbReference type="GO" id="GO:0019843">
    <property type="term" value="F:rRNA binding"/>
    <property type="evidence" value="ECO:0007669"/>
    <property type="project" value="UniProtKB-UniRule"/>
</dbReference>
<dbReference type="GO" id="GO:0003735">
    <property type="term" value="F:structural constituent of ribosome"/>
    <property type="evidence" value="ECO:0007669"/>
    <property type="project" value="InterPro"/>
</dbReference>
<dbReference type="GO" id="GO:0006412">
    <property type="term" value="P:translation"/>
    <property type="evidence" value="ECO:0007669"/>
    <property type="project" value="UniProtKB-UniRule"/>
</dbReference>
<dbReference type="FunFam" id="3.10.430.100:FF:000006">
    <property type="entry name" value="50S ribosomal protein L9"/>
    <property type="match status" value="1"/>
</dbReference>
<dbReference type="FunFam" id="3.40.5.10:FF:000004">
    <property type="entry name" value="50S ribosomal protein L9"/>
    <property type="match status" value="1"/>
</dbReference>
<dbReference type="Gene3D" id="3.10.430.100">
    <property type="entry name" value="Ribosomal protein L9, C-terminal domain"/>
    <property type="match status" value="1"/>
</dbReference>
<dbReference type="Gene3D" id="3.40.5.10">
    <property type="entry name" value="Ribosomal protein L9, N-terminal domain"/>
    <property type="match status" value="1"/>
</dbReference>
<dbReference type="HAMAP" id="MF_00503">
    <property type="entry name" value="Ribosomal_bL9"/>
    <property type="match status" value="1"/>
</dbReference>
<dbReference type="InterPro" id="IPR000244">
    <property type="entry name" value="Ribosomal_bL9"/>
</dbReference>
<dbReference type="InterPro" id="IPR009027">
    <property type="entry name" value="Ribosomal_bL9/RNase_H1_N"/>
</dbReference>
<dbReference type="InterPro" id="IPR020594">
    <property type="entry name" value="Ribosomal_bL9_bac/chp"/>
</dbReference>
<dbReference type="InterPro" id="IPR020069">
    <property type="entry name" value="Ribosomal_bL9_C"/>
</dbReference>
<dbReference type="InterPro" id="IPR036791">
    <property type="entry name" value="Ribosomal_bL9_C_sf"/>
</dbReference>
<dbReference type="InterPro" id="IPR020070">
    <property type="entry name" value="Ribosomal_bL9_N"/>
</dbReference>
<dbReference type="InterPro" id="IPR036935">
    <property type="entry name" value="Ribosomal_bL9_N_sf"/>
</dbReference>
<dbReference type="NCBIfam" id="TIGR00158">
    <property type="entry name" value="L9"/>
    <property type="match status" value="1"/>
</dbReference>
<dbReference type="PANTHER" id="PTHR21368">
    <property type="entry name" value="50S RIBOSOMAL PROTEIN L9"/>
    <property type="match status" value="1"/>
</dbReference>
<dbReference type="Pfam" id="PF03948">
    <property type="entry name" value="Ribosomal_L9_C"/>
    <property type="match status" value="1"/>
</dbReference>
<dbReference type="Pfam" id="PF01281">
    <property type="entry name" value="Ribosomal_L9_N"/>
    <property type="match status" value="1"/>
</dbReference>
<dbReference type="SUPFAM" id="SSF55658">
    <property type="entry name" value="L9 N-domain-like"/>
    <property type="match status" value="1"/>
</dbReference>
<dbReference type="SUPFAM" id="SSF55653">
    <property type="entry name" value="Ribosomal protein L9 C-domain"/>
    <property type="match status" value="1"/>
</dbReference>
<dbReference type="PROSITE" id="PS00651">
    <property type="entry name" value="RIBOSOMAL_L9"/>
    <property type="match status" value="1"/>
</dbReference>
<sequence length="147" mass="15939">MEIILKEDVVNLGYKNDIVTVKSGYGRNYLIPTGKAVIASPSAKKMLAEELKQRAHKLEKIKKDAEALAAKLEGVSLTIATKVSSTGTIFGSVGNIQIAEELAKLGHEIDRKIIVVKDAVKEVGAYKAIVKLHKEVSVEIPFEVVAE</sequence>
<proteinExistence type="inferred from homology"/>
<feature type="chain" id="PRO_0000236481" description="Large ribosomal subunit protein bL9">
    <location>
        <begin position="1"/>
        <end position="147"/>
    </location>
</feature>
<keyword id="KW-0687">Ribonucleoprotein</keyword>
<keyword id="KW-0689">Ribosomal protein</keyword>
<keyword id="KW-0694">RNA-binding</keyword>
<keyword id="KW-0699">rRNA-binding</keyword>
<accession>Q5L9B7</accession>
<reference key="1">
    <citation type="journal article" date="2005" name="Science">
        <title>Extensive DNA inversions in the B. fragilis genome control variable gene expression.</title>
        <authorList>
            <person name="Cerdeno-Tarraga A.-M."/>
            <person name="Patrick S."/>
            <person name="Crossman L.C."/>
            <person name="Blakely G."/>
            <person name="Abratt V."/>
            <person name="Lennard N."/>
            <person name="Poxton I."/>
            <person name="Duerden B."/>
            <person name="Harris B."/>
            <person name="Quail M.A."/>
            <person name="Barron A."/>
            <person name="Clark L."/>
            <person name="Corton C."/>
            <person name="Doggett J."/>
            <person name="Holden M.T.G."/>
            <person name="Larke N."/>
            <person name="Line A."/>
            <person name="Lord A."/>
            <person name="Norbertczak H."/>
            <person name="Ormond D."/>
            <person name="Price C."/>
            <person name="Rabbinowitsch E."/>
            <person name="Woodward J."/>
            <person name="Barrell B.G."/>
            <person name="Parkhill J."/>
        </authorList>
    </citation>
    <scope>NUCLEOTIDE SEQUENCE [LARGE SCALE GENOMIC DNA]</scope>
    <source>
        <strain>ATCC 25285 / DSM 2151 / CCUG 4856 / JCM 11019 / LMG 10263 / NCTC 9343 / Onslow / VPI 2553 / EN-2</strain>
    </source>
</reference>
<comment type="function">
    <text evidence="1">Binds to the 23S rRNA.</text>
</comment>
<comment type="similarity">
    <text evidence="1">Belongs to the bacterial ribosomal protein bL9 family.</text>
</comment>
<organism>
    <name type="scientific">Bacteroides fragilis (strain ATCC 25285 / DSM 2151 / CCUG 4856 / JCM 11019 / LMG 10263 / NCTC 9343 / Onslow / VPI 2553 / EN-2)</name>
    <dbReference type="NCBI Taxonomy" id="272559"/>
    <lineage>
        <taxon>Bacteria</taxon>
        <taxon>Pseudomonadati</taxon>
        <taxon>Bacteroidota</taxon>
        <taxon>Bacteroidia</taxon>
        <taxon>Bacteroidales</taxon>
        <taxon>Bacteroidaceae</taxon>
        <taxon>Bacteroides</taxon>
    </lineage>
</organism>